<reference key="1">
    <citation type="journal article" date="1995" name="Proc. Natl. Acad. Sci. U.S.A.">
        <title>Amino-terminal protein processing in Saccharomyces cerevisiae is an essential function that requires two distinct methionine aminopeptidases.</title>
        <authorList>
            <person name="Li X."/>
            <person name="Chang Y.-H."/>
        </authorList>
    </citation>
    <scope>NUCLEOTIDE SEQUENCE [GENOMIC DNA]</scope>
    <scope>FUNCTION</scope>
    <scope>CATALYTIC ACTIVITY</scope>
    <source>
        <strain>ATCC 76626 / YPH500</strain>
    </source>
</reference>
<reference key="2">
    <citation type="journal article" date="1995" name="Yeast">
        <title>Sequence analysis of a 78.6 kb segment of the left end of Saccharomyces cerevisiae chromosome II.</title>
        <authorList>
            <person name="Obermaier B."/>
            <person name="Gassenhuber J."/>
            <person name="Piravandi E."/>
            <person name="Domdey H."/>
        </authorList>
    </citation>
    <scope>NUCLEOTIDE SEQUENCE [GENOMIC DNA]</scope>
    <source>
        <strain>ATCC 204508 / S288c</strain>
    </source>
</reference>
<reference key="3">
    <citation type="journal article" date="1994" name="EMBO J.">
        <title>Complete DNA sequence of yeast chromosome II.</title>
        <authorList>
            <person name="Feldmann H."/>
            <person name="Aigle M."/>
            <person name="Aljinovic G."/>
            <person name="Andre B."/>
            <person name="Baclet M.C."/>
            <person name="Barthe C."/>
            <person name="Baur A."/>
            <person name="Becam A.-M."/>
            <person name="Biteau N."/>
            <person name="Boles E."/>
            <person name="Brandt T."/>
            <person name="Brendel M."/>
            <person name="Brueckner M."/>
            <person name="Bussereau F."/>
            <person name="Christiansen C."/>
            <person name="Contreras R."/>
            <person name="Crouzet M."/>
            <person name="Cziepluch C."/>
            <person name="Demolis N."/>
            <person name="Delaveau T."/>
            <person name="Doignon F."/>
            <person name="Domdey H."/>
            <person name="Duesterhus S."/>
            <person name="Dubois E."/>
            <person name="Dujon B."/>
            <person name="El Bakkoury M."/>
            <person name="Entian K.-D."/>
            <person name="Feuermann M."/>
            <person name="Fiers W."/>
            <person name="Fobo G.M."/>
            <person name="Fritz C."/>
            <person name="Gassenhuber J."/>
            <person name="Glansdorff N."/>
            <person name="Goffeau A."/>
            <person name="Grivell L.A."/>
            <person name="de Haan M."/>
            <person name="Hein C."/>
            <person name="Herbert C.J."/>
            <person name="Hollenberg C.P."/>
            <person name="Holmstroem K."/>
            <person name="Jacq C."/>
            <person name="Jacquet M."/>
            <person name="Jauniaux J.-C."/>
            <person name="Jonniaux J.-L."/>
            <person name="Kallesoee T."/>
            <person name="Kiesau P."/>
            <person name="Kirchrath L."/>
            <person name="Koetter P."/>
            <person name="Korol S."/>
            <person name="Liebl S."/>
            <person name="Logghe M."/>
            <person name="Lohan A.J.E."/>
            <person name="Louis E.J."/>
            <person name="Li Z.Y."/>
            <person name="Maat M.J."/>
            <person name="Mallet L."/>
            <person name="Mannhaupt G."/>
            <person name="Messenguy F."/>
            <person name="Miosga T."/>
            <person name="Molemans F."/>
            <person name="Mueller S."/>
            <person name="Nasr F."/>
            <person name="Obermaier B."/>
            <person name="Perea J."/>
            <person name="Pierard A."/>
            <person name="Piravandi E."/>
            <person name="Pohl F.M."/>
            <person name="Pohl T.M."/>
            <person name="Potier S."/>
            <person name="Proft M."/>
            <person name="Purnelle B."/>
            <person name="Ramezani Rad M."/>
            <person name="Rieger M."/>
            <person name="Rose M."/>
            <person name="Schaaff-Gerstenschlaeger I."/>
            <person name="Scherens B."/>
            <person name="Schwarzlose C."/>
            <person name="Skala J."/>
            <person name="Slonimski P.P."/>
            <person name="Smits P.H.M."/>
            <person name="Souciet J.-L."/>
            <person name="Steensma H.Y."/>
            <person name="Stucka R."/>
            <person name="Urrestarazu L.A."/>
            <person name="van der Aart Q.J.M."/>
            <person name="Van Dyck L."/>
            <person name="Vassarotti A."/>
            <person name="Vetter I."/>
            <person name="Vierendeels F."/>
            <person name="Vissers S."/>
            <person name="Wagner G."/>
            <person name="de Wergifosse P."/>
            <person name="Wolfe K.H."/>
            <person name="Zagulski M."/>
            <person name="Zimmermann F.K."/>
            <person name="Mewes H.-W."/>
            <person name="Kleine K."/>
        </authorList>
    </citation>
    <scope>NUCLEOTIDE SEQUENCE [LARGE SCALE GENOMIC DNA]</scope>
    <source>
        <strain>ATCC 204508 / S288c</strain>
    </source>
</reference>
<reference key="4">
    <citation type="journal article" date="2014" name="G3 (Bethesda)">
        <title>The reference genome sequence of Saccharomyces cerevisiae: Then and now.</title>
        <authorList>
            <person name="Engel S.R."/>
            <person name="Dietrich F.S."/>
            <person name="Fisk D.G."/>
            <person name="Binkley G."/>
            <person name="Balakrishnan R."/>
            <person name="Costanzo M.C."/>
            <person name="Dwight S.S."/>
            <person name="Hitz B.C."/>
            <person name="Karra K."/>
            <person name="Nash R.S."/>
            <person name="Weng S."/>
            <person name="Wong E.D."/>
            <person name="Lloyd P."/>
            <person name="Skrzypek M.S."/>
            <person name="Miyasato S.R."/>
            <person name="Simison M."/>
            <person name="Cherry J.M."/>
        </authorList>
    </citation>
    <scope>GENOME REANNOTATION</scope>
    <scope>SEQUENCE REVISION TO 86</scope>
    <source>
        <strain>ATCC 204508 / S288c</strain>
    </source>
</reference>
<reference key="5">
    <citation type="journal article" date="1995" name="Proc. Natl. Acad. Sci. U.S.A.">
        <title>Eukaryotic methionyl aminopeptidases: two classes of cobalt-dependent enzymes.</title>
        <authorList>
            <person name="Arfin S.M."/>
            <person name="Kendall R.L."/>
            <person name="Hall L."/>
            <person name="Weaver L.H."/>
            <person name="Stewart A.E."/>
            <person name="Matthews B.W."/>
            <person name="Bradshaw R.A."/>
        </authorList>
    </citation>
    <scope>IDENTIFICATION</scope>
</reference>
<reference key="6">
    <citation type="journal article" date="1997" name="Proc. Natl. Acad. Sci. U.S.A.">
        <title>The anti-angiogenic agent fumagillin covalently binds and inhibits the methionine aminopeptidase, MetAP-2.</title>
        <authorList>
            <person name="Sin N."/>
            <person name="Meng L."/>
            <person name="Wang M.Q."/>
            <person name="Wen J.J."/>
            <person name="Bornmann W.G."/>
            <person name="Crews C.M."/>
        </authorList>
    </citation>
    <scope>FUNCTION</scope>
    <scope>ACTIVITY REGULATION</scope>
</reference>
<reference key="7">
    <citation type="journal article" date="2002" name="Arch. Biochem. Biophys.">
        <title>The specificity in vivo of two distinct methionine aminopeptidases in Saccharomyces cerevisiae.</title>
        <authorList>
            <person name="Chen S."/>
            <person name="Vetro J.A."/>
            <person name="Chang Y.H."/>
        </authorList>
    </citation>
    <scope>FUNCTION</scope>
    <scope>SUBSTRATE SPECIFICITY</scope>
</reference>
<reference key="8">
    <citation type="journal article" date="2003" name="J. Cell. Biochem.">
        <title>N-terminal methionine removal and methionine metabolism in Saccharomyces cerevisiae.</title>
        <authorList>
            <person name="Dummitt B."/>
            <person name="Micka W.S."/>
            <person name="Chang Y.H."/>
        </authorList>
    </citation>
    <scope>FUNCTION</scope>
    <scope>ACTIVITY REGULATION</scope>
</reference>
<reference key="9">
    <citation type="journal article" date="2003" name="Nature">
        <title>Global analysis of protein localization in budding yeast.</title>
        <authorList>
            <person name="Huh W.-K."/>
            <person name="Falvo J.V."/>
            <person name="Gerke L.C."/>
            <person name="Carroll A.S."/>
            <person name="Howson R.W."/>
            <person name="Weissman J.S."/>
            <person name="O'Shea E.K."/>
        </authorList>
    </citation>
    <scope>SUBCELLULAR LOCATION [LARGE SCALE ANALYSIS]</scope>
</reference>
<reference key="10">
    <citation type="journal article" date="2003" name="Nature">
        <title>Global analysis of protein expression in yeast.</title>
        <authorList>
            <person name="Ghaemmaghami S."/>
            <person name="Huh W.-K."/>
            <person name="Bower K."/>
            <person name="Howson R.W."/>
            <person name="Belle A."/>
            <person name="Dephoure N."/>
            <person name="O'Shea E.K."/>
            <person name="Weissman J.S."/>
        </authorList>
    </citation>
    <scope>LEVEL OF PROTEIN EXPRESSION [LARGE SCALE ANALYSIS]</scope>
</reference>
<reference key="11">
    <citation type="journal article" date="2005" name="J. Cell. Biochem.">
        <title>Evidence of a dominant negative mutant of yeast methionine aminopeptidase type 2 in Saccharomyces cerevisiae.</title>
        <authorList>
            <person name="Vetro J.A."/>
            <person name="Dummitt B."/>
            <person name="Micka W.S."/>
            <person name="Chang Y.H."/>
        </authorList>
    </citation>
    <scope>FUNCTION</scope>
    <scope>MUTAGENESIS OF HIS-174</scope>
</reference>
<reference key="12">
    <citation type="journal article" date="2008" name="Mol. Cell. Proteomics">
        <title>A multidimensional chromatography technology for in-depth phosphoproteome analysis.</title>
        <authorList>
            <person name="Albuquerque C.P."/>
            <person name="Smolka M.B."/>
            <person name="Payne S.H."/>
            <person name="Bafna V."/>
            <person name="Eng J."/>
            <person name="Zhou H."/>
        </authorList>
    </citation>
    <scope>PHOSPHORYLATION [LARGE SCALE ANALYSIS] AT SER-35</scope>
    <scope>IDENTIFICATION BY MASS SPECTROMETRY [LARGE SCALE ANALYSIS]</scope>
</reference>
<reference key="13">
    <citation type="journal article" date="2009" name="Science">
        <title>Global analysis of Cdk1 substrate phosphorylation sites provides insights into evolution.</title>
        <authorList>
            <person name="Holt L.J."/>
            <person name="Tuch B.B."/>
            <person name="Villen J."/>
            <person name="Johnson A.D."/>
            <person name="Gygi S.P."/>
            <person name="Morgan D.O."/>
        </authorList>
    </citation>
    <scope>PHOSPHORYLATION [LARGE SCALE ANALYSIS] AT SER-35</scope>
    <scope>IDENTIFICATION BY MASS SPECTROMETRY [LARGE SCALE ANALYSIS]</scope>
</reference>
<proteinExistence type="evidence at protein level"/>
<sequence length="421" mass="47518">MTDAEIENSPASDLKELNLENEGVEQQDQAKADESDPVESKKKKNKKKKKKKSNVKKIELLFPDGKYPEGAWMDYHQDFNLQRTTDEESRYLKRDLERAEHWNDVRKGAEIHRRVRRAIKDRIVPGMKLMDIADMIENTTRKYTGAENLLAMEDPKSQGIGFPTGLSLNHCAAHFTPNAGDKTVLKYEDVMKVDYGVQVNGNIIDSAFTVSFDPQYDNLLAAVKDATYTGIKEAGIDVRLTDIGEAIQEVMESYEVEINGETYQVKPCRNLCGHSIAPYRIHGGKSVPIVKNGDTTKMEEGEHFAIETFGSTGRGYVTAGGEVSHYARSAEDHQVMPTLDSAKNLLKTIDRNFGTLPFCRRYLDRLGQEKYLFALNNLVRHGLVQDYPPLNDIPGSYTAQFEHTILLHAHKKEVVSKGDDY</sequence>
<keyword id="KW-0031">Aminopeptidase</keyword>
<keyword id="KW-0963">Cytoplasm</keyword>
<keyword id="KW-0378">Hydrolase</keyword>
<keyword id="KW-0479">Metal-binding</keyword>
<keyword id="KW-0597">Phosphoprotein</keyword>
<keyword id="KW-0645">Protease</keyword>
<keyword id="KW-1185">Reference proteome</keyword>
<organism>
    <name type="scientific">Saccharomyces cerevisiae (strain ATCC 204508 / S288c)</name>
    <name type="common">Baker's yeast</name>
    <dbReference type="NCBI Taxonomy" id="559292"/>
    <lineage>
        <taxon>Eukaryota</taxon>
        <taxon>Fungi</taxon>
        <taxon>Dikarya</taxon>
        <taxon>Ascomycota</taxon>
        <taxon>Saccharomycotina</taxon>
        <taxon>Saccharomycetes</taxon>
        <taxon>Saccharomycetales</taxon>
        <taxon>Saccharomycetaceae</taxon>
        <taxon>Saccharomyces</taxon>
    </lineage>
</organism>
<protein>
    <recommendedName>
        <fullName evidence="1">Methionine aminopeptidase 2</fullName>
        <shortName evidence="1">MAP 2</shortName>
        <shortName evidence="1">MetAP 2</shortName>
        <ecNumber evidence="1">3.4.11.18</ecNumber>
    </recommendedName>
    <alternativeName>
        <fullName evidence="1">Peptidase M</fullName>
    </alternativeName>
</protein>
<gene>
    <name evidence="1" type="primary">MAP2</name>
    <name type="ordered locus">YBL091C</name>
    <name type="ORF">YBL0701</name>
</gene>
<name>MAP2_YEAST</name>
<dbReference type="EC" id="3.4.11.18" evidence="1"/>
<dbReference type="EMBL" id="U17437">
    <property type="protein sequence ID" value="AAC49142.1"/>
    <property type="molecule type" value="Genomic_DNA"/>
</dbReference>
<dbReference type="EMBL" id="X79489">
    <property type="protein sequence ID" value="CAA56011.1"/>
    <property type="status" value="ALT_INIT"/>
    <property type="molecule type" value="Genomic_DNA"/>
</dbReference>
<dbReference type="EMBL" id="Z35851">
    <property type="protein sequence ID" value="CAA84912.1"/>
    <property type="molecule type" value="Genomic_DNA"/>
</dbReference>
<dbReference type="EMBL" id="Z35852">
    <property type="protein sequence ID" value="CAA84913.1"/>
    <property type="molecule type" value="Genomic_DNA"/>
</dbReference>
<dbReference type="EMBL" id="BK006936">
    <property type="protein sequence ID" value="DAA07033.2"/>
    <property type="molecule type" value="Genomic_DNA"/>
</dbReference>
<dbReference type="RefSeq" id="NP_009462.2">
    <property type="nucleotide sequence ID" value="NM_001178331.2"/>
</dbReference>
<dbReference type="SMR" id="P38174"/>
<dbReference type="BioGRID" id="32613">
    <property type="interactions" value="95"/>
</dbReference>
<dbReference type="DIP" id="DIP-6459N"/>
<dbReference type="FunCoup" id="P38174">
    <property type="interactions" value="1378"/>
</dbReference>
<dbReference type="IntAct" id="P38174">
    <property type="interactions" value="13"/>
</dbReference>
<dbReference type="STRING" id="4932.YBL091C"/>
<dbReference type="MEROPS" id="M24.002"/>
<dbReference type="GlyGen" id="P38174">
    <property type="glycosylation" value="1 site"/>
</dbReference>
<dbReference type="iPTMnet" id="P38174"/>
<dbReference type="PaxDb" id="4932-YBL091C"/>
<dbReference type="PeptideAtlas" id="P38174"/>
<dbReference type="EnsemblFungi" id="YBL091C_mRNA">
    <property type="protein sequence ID" value="YBL091C"/>
    <property type="gene ID" value="YBL091C"/>
</dbReference>
<dbReference type="GeneID" id="852187"/>
<dbReference type="KEGG" id="sce:YBL091C"/>
<dbReference type="AGR" id="SGD:S000000187"/>
<dbReference type="SGD" id="S000000187">
    <property type="gene designation" value="MAP2"/>
</dbReference>
<dbReference type="VEuPathDB" id="FungiDB:YBL091C"/>
<dbReference type="eggNOG" id="KOG2775">
    <property type="taxonomic scope" value="Eukaryota"/>
</dbReference>
<dbReference type="GeneTree" id="ENSGT00940000172436"/>
<dbReference type="HOGENOM" id="CLU_015857_7_1_1"/>
<dbReference type="InParanoid" id="P38174"/>
<dbReference type="OMA" id="PFAKRWL"/>
<dbReference type="OrthoDB" id="7848262at2759"/>
<dbReference type="BioCyc" id="YEAST:YBL091C-MONOMER"/>
<dbReference type="Reactome" id="R-SCE-2514859">
    <property type="pathway name" value="Inactivation, recovery and regulation of the phototransduction cascade"/>
</dbReference>
<dbReference type="BioGRID-ORCS" id="852187">
    <property type="hits" value="0 hits in 10 CRISPR screens"/>
</dbReference>
<dbReference type="PRO" id="PR:P38174"/>
<dbReference type="Proteomes" id="UP000002311">
    <property type="component" value="Chromosome II"/>
</dbReference>
<dbReference type="RNAct" id="P38174">
    <property type="molecule type" value="protein"/>
</dbReference>
<dbReference type="GO" id="GO:0005737">
    <property type="term" value="C:cytoplasm"/>
    <property type="evidence" value="ECO:0007005"/>
    <property type="project" value="SGD"/>
</dbReference>
<dbReference type="GO" id="GO:0005634">
    <property type="term" value="C:nucleus"/>
    <property type="evidence" value="ECO:0007005"/>
    <property type="project" value="SGD"/>
</dbReference>
<dbReference type="GO" id="GO:0004177">
    <property type="term" value="F:aminopeptidase activity"/>
    <property type="evidence" value="ECO:0000318"/>
    <property type="project" value="GO_Central"/>
</dbReference>
<dbReference type="GO" id="GO:0004239">
    <property type="term" value="F:initiator methionyl aminopeptidase activity"/>
    <property type="evidence" value="ECO:0007669"/>
    <property type="project" value="UniProtKB-UniRule"/>
</dbReference>
<dbReference type="GO" id="GO:0046872">
    <property type="term" value="F:metal ion binding"/>
    <property type="evidence" value="ECO:0007669"/>
    <property type="project" value="UniProtKB-UniRule"/>
</dbReference>
<dbReference type="GO" id="GO:0070006">
    <property type="term" value="F:metalloaminopeptidase activity"/>
    <property type="evidence" value="ECO:0000316"/>
    <property type="project" value="SGD"/>
</dbReference>
<dbReference type="GO" id="GO:0008235">
    <property type="term" value="F:metalloexopeptidase activity"/>
    <property type="evidence" value="ECO:0000318"/>
    <property type="project" value="GO_Central"/>
</dbReference>
<dbReference type="GO" id="GO:0051604">
    <property type="term" value="P:protein maturation"/>
    <property type="evidence" value="ECO:0000315"/>
    <property type="project" value="SGD"/>
</dbReference>
<dbReference type="GO" id="GO:0006508">
    <property type="term" value="P:proteolysis"/>
    <property type="evidence" value="ECO:0007669"/>
    <property type="project" value="UniProtKB-KW"/>
</dbReference>
<dbReference type="CDD" id="cd01088">
    <property type="entry name" value="MetAP2"/>
    <property type="match status" value="1"/>
</dbReference>
<dbReference type="FunFam" id="1.10.10.10:FF:000370">
    <property type="entry name" value="Methionine aminopeptidase 2"/>
    <property type="match status" value="1"/>
</dbReference>
<dbReference type="Gene3D" id="3.90.230.10">
    <property type="entry name" value="Creatinase/methionine aminopeptidase superfamily"/>
    <property type="match status" value="1"/>
</dbReference>
<dbReference type="Gene3D" id="1.10.10.10">
    <property type="entry name" value="Winged helix-like DNA-binding domain superfamily/Winged helix DNA-binding domain"/>
    <property type="match status" value="1"/>
</dbReference>
<dbReference type="HAMAP" id="MF_03175">
    <property type="entry name" value="MetAP_2_euk"/>
    <property type="match status" value="1"/>
</dbReference>
<dbReference type="InterPro" id="IPR036005">
    <property type="entry name" value="Creatinase/aminopeptidase-like"/>
</dbReference>
<dbReference type="InterPro" id="IPR050247">
    <property type="entry name" value="Met_Aminopeptidase_Type2"/>
</dbReference>
<dbReference type="InterPro" id="IPR000994">
    <property type="entry name" value="Pept_M24"/>
</dbReference>
<dbReference type="InterPro" id="IPR001714">
    <property type="entry name" value="Pept_M24_MAP"/>
</dbReference>
<dbReference type="InterPro" id="IPR002468">
    <property type="entry name" value="Pept_M24A_MAP2"/>
</dbReference>
<dbReference type="InterPro" id="IPR018349">
    <property type="entry name" value="Pept_M24A_MAP2_BS"/>
</dbReference>
<dbReference type="InterPro" id="IPR036388">
    <property type="entry name" value="WH-like_DNA-bd_sf"/>
</dbReference>
<dbReference type="InterPro" id="IPR036390">
    <property type="entry name" value="WH_DNA-bd_sf"/>
</dbReference>
<dbReference type="NCBIfam" id="TIGR00501">
    <property type="entry name" value="met_pdase_II"/>
    <property type="match status" value="1"/>
</dbReference>
<dbReference type="PANTHER" id="PTHR45777">
    <property type="entry name" value="METHIONINE AMINOPEPTIDASE 2"/>
    <property type="match status" value="1"/>
</dbReference>
<dbReference type="PANTHER" id="PTHR45777:SF2">
    <property type="entry name" value="METHIONINE AMINOPEPTIDASE 2"/>
    <property type="match status" value="1"/>
</dbReference>
<dbReference type="Pfam" id="PF00557">
    <property type="entry name" value="Peptidase_M24"/>
    <property type="match status" value="1"/>
</dbReference>
<dbReference type="PRINTS" id="PR00599">
    <property type="entry name" value="MAPEPTIDASE"/>
</dbReference>
<dbReference type="SUPFAM" id="SSF55920">
    <property type="entry name" value="Creatinase/aminopeptidase"/>
    <property type="match status" value="1"/>
</dbReference>
<dbReference type="SUPFAM" id="SSF46785">
    <property type="entry name" value="Winged helix' DNA-binding domain"/>
    <property type="match status" value="1"/>
</dbReference>
<dbReference type="PROSITE" id="PS01202">
    <property type="entry name" value="MAP_2"/>
    <property type="match status" value="1"/>
</dbReference>
<comment type="function">
    <text evidence="1 3 4 7 8 9">Cotranslationally removes the N-terminal methionine from nascent proteins. The N-terminal methionine is often cleaved when the second residue in the primary sequence is small and uncharged (Met-Ala-, Cys, Gly, Pro, Ser, Thr, or Val). Plays only a minor role in N-terminal methionine removal. Less efficient when the second residue is Val, Gly, Cys or Thr.</text>
</comment>
<comment type="catalytic activity">
    <reaction evidence="1 8">
        <text>Release of N-terminal amino acids, preferentially methionine, from peptides and arylamides.</text>
        <dbReference type="EC" id="3.4.11.18"/>
    </reaction>
</comment>
<comment type="cofactor">
    <cofactor evidence="1">
        <name>Co(2+)</name>
        <dbReference type="ChEBI" id="CHEBI:48828"/>
    </cofactor>
    <cofactor evidence="1">
        <name>Zn(2+)</name>
        <dbReference type="ChEBI" id="CHEBI:29105"/>
    </cofactor>
    <cofactor evidence="1">
        <name>Mn(2+)</name>
        <dbReference type="ChEBI" id="CHEBI:29035"/>
    </cofactor>
    <cofactor evidence="1">
        <name>Fe(2+)</name>
        <dbReference type="ChEBI" id="CHEBI:29033"/>
    </cofactor>
    <text evidence="1">Binds 2 divalent metal cations per subunit. Has a high-affinity and a low affinity metal-binding site. The true nature of the physiological cofactor is under debate. The enzyme is active with cobalt, zinc, manganese or divalent iron ions. Most likely, methionine aminopeptidases function as mononuclear Fe(2+)-metalloproteases under physiological conditions, and the catalytically relevant metal-binding site has been assigned to the histidine-containing high-affinity site. Also zinc has been proposed to be the physiological cofactor for yeast.</text>
</comment>
<comment type="activity regulation">
    <text evidence="4 9">Irreversibly inhibited by the fungal metabolite fumagillin, an antiangiogenic drug. Subject to product inhibition by cytosolic methionine.</text>
</comment>
<comment type="subcellular location">
    <subcellularLocation>
        <location evidence="1 5">Cytoplasm</location>
    </subcellularLocation>
</comment>
<comment type="miscellaneous">
    <text evidence="6">Present with 1080 molecules/cell in log phase SD medium.</text>
</comment>
<comment type="similarity">
    <text evidence="1">Belongs to the peptidase M24A family. Methionine aminopeptidase eukaryotic type 2 subfamily.</text>
</comment>
<comment type="sequence caution" evidence="10">
    <conflict type="erroneous initiation">
        <sequence resource="EMBL-CDS" id="CAA56011"/>
    </conflict>
    <text>Truncated N-terminus.</text>
</comment>
<feature type="chain" id="PRO_0000148988" description="Methionine aminopeptidase 2">
    <location>
        <begin position="1"/>
        <end position="421"/>
    </location>
</feature>
<feature type="region of interest" description="Disordered" evidence="2">
    <location>
        <begin position="1"/>
        <end position="53"/>
    </location>
</feature>
<feature type="compositionally biased region" description="Basic and acidic residues" evidence="2">
    <location>
        <begin position="28"/>
        <end position="40"/>
    </location>
</feature>
<feature type="compositionally biased region" description="Basic residues" evidence="2">
    <location>
        <begin position="41"/>
        <end position="53"/>
    </location>
</feature>
<feature type="binding site" evidence="1">
    <location>
        <position position="174"/>
    </location>
    <ligand>
        <name>substrate</name>
    </ligand>
</feature>
<feature type="binding site" evidence="1">
    <location>
        <position position="194"/>
    </location>
    <ligand>
        <name>a divalent metal cation</name>
        <dbReference type="ChEBI" id="CHEBI:60240"/>
        <label>1</label>
    </ligand>
</feature>
<feature type="binding site" evidence="1">
    <location>
        <position position="205"/>
    </location>
    <ligand>
        <name>a divalent metal cation</name>
        <dbReference type="ChEBI" id="CHEBI:60240"/>
        <label>1</label>
    </ligand>
</feature>
<feature type="binding site" evidence="1">
    <location>
        <position position="205"/>
    </location>
    <ligand>
        <name>a divalent metal cation</name>
        <dbReference type="ChEBI" id="CHEBI:60240"/>
        <label>2</label>
        <note>catalytic</note>
    </ligand>
</feature>
<feature type="binding site" evidence="1">
    <location>
        <position position="274"/>
    </location>
    <ligand>
        <name>a divalent metal cation</name>
        <dbReference type="ChEBI" id="CHEBI:60240"/>
        <label>2</label>
        <note>catalytic</note>
    </ligand>
</feature>
<feature type="binding site" evidence="1">
    <location>
        <position position="282"/>
    </location>
    <ligand>
        <name>substrate</name>
    </ligand>
</feature>
<feature type="binding site" evidence="1">
    <location>
        <position position="307"/>
    </location>
    <ligand>
        <name>a divalent metal cation</name>
        <dbReference type="ChEBI" id="CHEBI:60240"/>
        <label>2</label>
        <note>catalytic</note>
    </ligand>
</feature>
<feature type="binding site" evidence="1">
    <location>
        <position position="402"/>
    </location>
    <ligand>
        <name>a divalent metal cation</name>
        <dbReference type="ChEBI" id="CHEBI:60240"/>
        <label>1</label>
    </ligand>
</feature>
<feature type="binding site" evidence="1">
    <location>
        <position position="402"/>
    </location>
    <ligand>
        <name>a divalent metal cation</name>
        <dbReference type="ChEBI" id="CHEBI:60240"/>
        <label>2</label>
        <note>catalytic</note>
    </ligand>
</feature>
<feature type="modified residue" description="Phosphoserine" evidence="11 12">
    <location>
        <position position="35"/>
    </location>
</feature>
<feature type="mutagenesis site" description="Abolishes catalytic activity." evidence="7">
    <original>H</original>
    <variation>A</variation>
    <location>
        <position position="174"/>
    </location>
</feature>
<feature type="sequence conflict" description="In Ref. 2; CAA56011 and 3; CAA84912." evidence="10" ref="2 3">
    <original>D</original>
    <variation>V</variation>
    <location>
        <position position="86"/>
    </location>
</feature>
<accession>P38174</accession>
<accession>D6VPR3</accession>
<accession>P89493</accession>
<evidence type="ECO:0000255" key="1">
    <source>
        <dbReference type="HAMAP-Rule" id="MF_03175"/>
    </source>
</evidence>
<evidence type="ECO:0000256" key="2">
    <source>
        <dbReference type="SAM" id="MobiDB-lite"/>
    </source>
</evidence>
<evidence type="ECO:0000269" key="3">
    <source>
    </source>
</evidence>
<evidence type="ECO:0000269" key="4">
    <source>
    </source>
</evidence>
<evidence type="ECO:0000269" key="5">
    <source>
    </source>
</evidence>
<evidence type="ECO:0000269" key="6">
    <source>
    </source>
</evidence>
<evidence type="ECO:0000269" key="7">
    <source>
    </source>
</evidence>
<evidence type="ECO:0000269" key="8">
    <source>
    </source>
</evidence>
<evidence type="ECO:0000269" key="9">
    <source>
    </source>
</evidence>
<evidence type="ECO:0000305" key="10"/>
<evidence type="ECO:0007744" key="11">
    <source>
    </source>
</evidence>
<evidence type="ECO:0007744" key="12">
    <source>
    </source>
</evidence>